<proteinExistence type="inferred from homology"/>
<reference key="1">
    <citation type="journal article" date="2008" name="Appl. Environ. Microbiol.">
        <title>The genome of Polaromonas sp. strain JS666: insights into the evolution of a hydrocarbon- and xenobiotic-degrading bacterium, and features of relevance to biotechnology.</title>
        <authorList>
            <person name="Mattes T.E."/>
            <person name="Alexander A.K."/>
            <person name="Richardson P.M."/>
            <person name="Munk A.C."/>
            <person name="Han C.S."/>
            <person name="Stothard P."/>
            <person name="Coleman N.V."/>
        </authorList>
    </citation>
    <scope>NUCLEOTIDE SEQUENCE [LARGE SCALE GENOMIC DNA]</scope>
    <source>
        <strain>JS666 / ATCC BAA-500</strain>
    </source>
</reference>
<name>TYSY_POLSJ</name>
<evidence type="ECO:0000255" key="1">
    <source>
        <dbReference type="HAMAP-Rule" id="MF_00008"/>
    </source>
</evidence>
<keyword id="KW-0963">Cytoplasm</keyword>
<keyword id="KW-0489">Methyltransferase</keyword>
<keyword id="KW-0545">Nucleotide biosynthesis</keyword>
<keyword id="KW-1185">Reference proteome</keyword>
<keyword id="KW-0808">Transferase</keyword>
<sequence length="284" mass="32301">MNTPPETRPDRPIRSQYEDFMRHVDAHGVFKADRTGTGTKSVFGYQMRFDLNEGFPLVTTKKVHLKSIVQELLWFLTGSSDNNWLKERGVTIWDEWAREDGDLGPVYGVQWRSWPTPDGGHIDQISEVIKTLKTNPDSRRIIVSAWNVADLSKMALMPCHAFFQFYVAPATEAGGKGKLSCQLYQRSADIFLGVPFNIGSYALLTHMVAQQCDLDVGDFIWTGGDCHIYSNHAEQVALQLSRAPFPYPTLHIKRKPESIFDYQFDDFEFLDYQHHAAIKAPVAV</sequence>
<comment type="function">
    <text evidence="1">Catalyzes the reductive methylation of 2'-deoxyuridine-5'-monophosphate (dUMP) to 2'-deoxythymidine-5'-monophosphate (dTMP) while utilizing 5,10-methylenetetrahydrofolate (mTHF) as the methyl donor and reductant in the reaction, yielding dihydrofolate (DHF) as a by-product. This enzymatic reaction provides an intracellular de novo source of dTMP, an essential precursor for DNA biosynthesis.</text>
</comment>
<comment type="catalytic activity">
    <reaction evidence="1">
        <text>dUMP + (6R)-5,10-methylene-5,6,7,8-tetrahydrofolate = 7,8-dihydrofolate + dTMP</text>
        <dbReference type="Rhea" id="RHEA:12104"/>
        <dbReference type="ChEBI" id="CHEBI:15636"/>
        <dbReference type="ChEBI" id="CHEBI:57451"/>
        <dbReference type="ChEBI" id="CHEBI:63528"/>
        <dbReference type="ChEBI" id="CHEBI:246422"/>
        <dbReference type="EC" id="2.1.1.45"/>
    </reaction>
</comment>
<comment type="pathway">
    <text evidence="1">Pyrimidine metabolism; dTTP biosynthesis.</text>
</comment>
<comment type="subunit">
    <text evidence="1">Homodimer.</text>
</comment>
<comment type="subcellular location">
    <subcellularLocation>
        <location evidence="1">Cytoplasm</location>
    </subcellularLocation>
</comment>
<comment type="similarity">
    <text evidence="1">Belongs to the thymidylate synthase family. Bacterial-type ThyA subfamily.</text>
</comment>
<accession>Q12CI6</accession>
<feature type="chain" id="PRO_0000321473" description="Thymidylate synthase">
    <location>
        <begin position="1"/>
        <end position="284"/>
    </location>
</feature>
<feature type="active site" description="Nucleophile" evidence="1">
    <location>
        <position position="159"/>
    </location>
</feature>
<feature type="binding site" description="in other chain" evidence="1">
    <location>
        <position position="34"/>
    </location>
    <ligand>
        <name>dUMP</name>
        <dbReference type="ChEBI" id="CHEBI:246422"/>
        <note>ligand shared between dimeric partners</note>
    </ligand>
</feature>
<feature type="binding site" evidence="1">
    <location>
        <position position="64"/>
    </location>
    <ligand>
        <name>(6R)-5,10-methylene-5,6,7,8-tetrahydrofolate</name>
        <dbReference type="ChEBI" id="CHEBI:15636"/>
    </ligand>
</feature>
<feature type="binding site" evidence="1">
    <location>
        <begin position="139"/>
        <end position="140"/>
    </location>
    <ligand>
        <name>dUMP</name>
        <dbReference type="ChEBI" id="CHEBI:246422"/>
        <note>ligand shared between dimeric partners</note>
    </ligand>
</feature>
<feature type="binding site" description="in other chain" evidence="1">
    <location>
        <begin position="186"/>
        <end position="189"/>
    </location>
    <ligand>
        <name>dUMP</name>
        <dbReference type="ChEBI" id="CHEBI:246422"/>
        <note>ligand shared between dimeric partners</note>
    </ligand>
</feature>
<feature type="binding site" evidence="1">
    <location>
        <position position="189"/>
    </location>
    <ligand>
        <name>(6R)-5,10-methylene-5,6,7,8-tetrahydrofolate</name>
        <dbReference type="ChEBI" id="CHEBI:15636"/>
    </ligand>
</feature>
<feature type="binding site" description="in other chain" evidence="1">
    <location>
        <position position="197"/>
    </location>
    <ligand>
        <name>dUMP</name>
        <dbReference type="ChEBI" id="CHEBI:246422"/>
        <note>ligand shared between dimeric partners</note>
    </ligand>
</feature>
<feature type="binding site" description="in other chain" evidence="1">
    <location>
        <begin position="227"/>
        <end position="229"/>
    </location>
    <ligand>
        <name>dUMP</name>
        <dbReference type="ChEBI" id="CHEBI:246422"/>
        <note>ligand shared between dimeric partners</note>
    </ligand>
</feature>
<feature type="binding site" evidence="1">
    <location>
        <position position="283"/>
    </location>
    <ligand>
        <name>(6R)-5,10-methylene-5,6,7,8-tetrahydrofolate</name>
        <dbReference type="ChEBI" id="CHEBI:15636"/>
    </ligand>
</feature>
<dbReference type="EC" id="2.1.1.45" evidence="1"/>
<dbReference type="EMBL" id="CP000316">
    <property type="protein sequence ID" value="ABE43756.1"/>
    <property type="molecule type" value="Genomic_DNA"/>
</dbReference>
<dbReference type="RefSeq" id="WP_011482755.1">
    <property type="nucleotide sequence ID" value="NC_007948.1"/>
</dbReference>
<dbReference type="SMR" id="Q12CI6"/>
<dbReference type="STRING" id="296591.Bpro_1823"/>
<dbReference type="KEGG" id="pol:Bpro_1823"/>
<dbReference type="eggNOG" id="COG0207">
    <property type="taxonomic scope" value="Bacteria"/>
</dbReference>
<dbReference type="HOGENOM" id="CLU_021669_0_0_4"/>
<dbReference type="OrthoDB" id="9774633at2"/>
<dbReference type="UniPathway" id="UPA00575"/>
<dbReference type="Proteomes" id="UP000001983">
    <property type="component" value="Chromosome"/>
</dbReference>
<dbReference type="GO" id="GO:0005829">
    <property type="term" value="C:cytosol"/>
    <property type="evidence" value="ECO:0007669"/>
    <property type="project" value="TreeGrafter"/>
</dbReference>
<dbReference type="GO" id="GO:0004799">
    <property type="term" value="F:thymidylate synthase activity"/>
    <property type="evidence" value="ECO:0007669"/>
    <property type="project" value="UniProtKB-UniRule"/>
</dbReference>
<dbReference type="GO" id="GO:0006231">
    <property type="term" value="P:dTMP biosynthetic process"/>
    <property type="evidence" value="ECO:0007669"/>
    <property type="project" value="UniProtKB-UniRule"/>
</dbReference>
<dbReference type="GO" id="GO:0006235">
    <property type="term" value="P:dTTP biosynthetic process"/>
    <property type="evidence" value="ECO:0007669"/>
    <property type="project" value="UniProtKB-UniRule"/>
</dbReference>
<dbReference type="GO" id="GO:0032259">
    <property type="term" value="P:methylation"/>
    <property type="evidence" value="ECO:0007669"/>
    <property type="project" value="UniProtKB-KW"/>
</dbReference>
<dbReference type="CDD" id="cd00351">
    <property type="entry name" value="TS_Pyrimidine_HMase"/>
    <property type="match status" value="1"/>
</dbReference>
<dbReference type="FunFam" id="3.30.572.10:FF:000013">
    <property type="entry name" value="Thymidylate synthase"/>
    <property type="match status" value="1"/>
</dbReference>
<dbReference type="Gene3D" id="3.30.572.10">
    <property type="entry name" value="Thymidylate synthase/dCMP hydroxymethylase domain"/>
    <property type="match status" value="1"/>
</dbReference>
<dbReference type="HAMAP" id="MF_00008">
    <property type="entry name" value="Thymidy_synth_bact"/>
    <property type="match status" value="1"/>
</dbReference>
<dbReference type="InterPro" id="IPR045097">
    <property type="entry name" value="Thymidate_synth/dCMP_Mease"/>
</dbReference>
<dbReference type="InterPro" id="IPR023451">
    <property type="entry name" value="Thymidate_synth/dCMP_Mease_dom"/>
</dbReference>
<dbReference type="InterPro" id="IPR036926">
    <property type="entry name" value="Thymidate_synth/dCMP_Mease_sf"/>
</dbReference>
<dbReference type="InterPro" id="IPR000398">
    <property type="entry name" value="Thymidylate_synthase"/>
</dbReference>
<dbReference type="InterPro" id="IPR020940">
    <property type="entry name" value="Thymidylate_synthase_AS"/>
</dbReference>
<dbReference type="NCBIfam" id="NF002497">
    <property type="entry name" value="PRK01827.1-3"/>
    <property type="match status" value="1"/>
</dbReference>
<dbReference type="NCBIfam" id="NF002499">
    <property type="entry name" value="PRK01827.1-5"/>
    <property type="match status" value="1"/>
</dbReference>
<dbReference type="NCBIfam" id="TIGR03284">
    <property type="entry name" value="thym_sym"/>
    <property type="match status" value="2"/>
</dbReference>
<dbReference type="PANTHER" id="PTHR11548">
    <property type="entry name" value="THYMIDYLATE SYNTHASE 1"/>
    <property type="match status" value="1"/>
</dbReference>
<dbReference type="PANTHER" id="PTHR11548:SF1">
    <property type="entry name" value="THYMIDYLATE SYNTHASE 1"/>
    <property type="match status" value="1"/>
</dbReference>
<dbReference type="Pfam" id="PF00303">
    <property type="entry name" value="Thymidylat_synt"/>
    <property type="match status" value="1"/>
</dbReference>
<dbReference type="PRINTS" id="PR00108">
    <property type="entry name" value="THYMDSNTHASE"/>
</dbReference>
<dbReference type="SUPFAM" id="SSF55831">
    <property type="entry name" value="Thymidylate synthase/dCMP hydroxymethylase"/>
    <property type="match status" value="1"/>
</dbReference>
<dbReference type="PROSITE" id="PS00091">
    <property type="entry name" value="THYMIDYLATE_SYNTHASE"/>
    <property type="match status" value="1"/>
</dbReference>
<protein>
    <recommendedName>
        <fullName evidence="1">Thymidylate synthase</fullName>
        <shortName evidence="1">TS</shortName>
        <shortName evidence="1">TSase</shortName>
        <ecNumber evidence="1">2.1.1.45</ecNumber>
    </recommendedName>
</protein>
<gene>
    <name evidence="1" type="primary">thyA</name>
    <name type="ordered locus">Bpro_1823</name>
</gene>
<organism>
    <name type="scientific">Polaromonas sp. (strain JS666 / ATCC BAA-500)</name>
    <dbReference type="NCBI Taxonomy" id="296591"/>
    <lineage>
        <taxon>Bacteria</taxon>
        <taxon>Pseudomonadati</taxon>
        <taxon>Pseudomonadota</taxon>
        <taxon>Betaproteobacteria</taxon>
        <taxon>Burkholderiales</taxon>
        <taxon>Comamonadaceae</taxon>
        <taxon>Polaromonas</taxon>
    </lineage>
</organism>